<gene>
    <name evidence="1" type="primary">atpF2</name>
    <name type="ordered locus">VIBHAR_06108</name>
</gene>
<accession>A7N2U5</accession>
<dbReference type="EMBL" id="CP000790">
    <property type="protein sequence ID" value="ABU74001.1"/>
    <property type="molecule type" value="Genomic_DNA"/>
</dbReference>
<dbReference type="RefSeq" id="WP_005431830.1">
    <property type="nucleotide sequence ID" value="NC_022270.1"/>
</dbReference>
<dbReference type="SMR" id="A7N2U5"/>
<dbReference type="KEGG" id="vha:VIBHAR_06108"/>
<dbReference type="PATRIC" id="fig|338187.25.peg.4216"/>
<dbReference type="Proteomes" id="UP000008152">
    <property type="component" value="Chromosome II"/>
</dbReference>
<dbReference type="GO" id="GO:0005886">
    <property type="term" value="C:plasma membrane"/>
    <property type="evidence" value="ECO:0007669"/>
    <property type="project" value="UniProtKB-SubCell"/>
</dbReference>
<dbReference type="GO" id="GO:0045259">
    <property type="term" value="C:proton-transporting ATP synthase complex"/>
    <property type="evidence" value="ECO:0007669"/>
    <property type="project" value="UniProtKB-KW"/>
</dbReference>
<dbReference type="GO" id="GO:0046933">
    <property type="term" value="F:proton-transporting ATP synthase activity, rotational mechanism"/>
    <property type="evidence" value="ECO:0007669"/>
    <property type="project" value="UniProtKB-UniRule"/>
</dbReference>
<dbReference type="GO" id="GO:0046961">
    <property type="term" value="F:proton-transporting ATPase activity, rotational mechanism"/>
    <property type="evidence" value="ECO:0007669"/>
    <property type="project" value="TreeGrafter"/>
</dbReference>
<dbReference type="CDD" id="cd06503">
    <property type="entry name" value="ATP-synt_Fo_b"/>
    <property type="match status" value="1"/>
</dbReference>
<dbReference type="Gene3D" id="1.20.5.620">
    <property type="entry name" value="F1F0 ATP synthase subunit B, membrane domain"/>
    <property type="match status" value="1"/>
</dbReference>
<dbReference type="HAMAP" id="MF_01398">
    <property type="entry name" value="ATP_synth_b_bprime"/>
    <property type="match status" value="1"/>
</dbReference>
<dbReference type="InterPro" id="IPR028987">
    <property type="entry name" value="ATP_synth_B-like_membr_sf"/>
</dbReference>
<dbReference type="InterPro" id="IPR002146">
    <property type="entry name" value="ATP_synth_b/b'su_bac/chlpt"/>
</dbReference>
<dbReference type="InterPro" id="IPR005864">
    <property type="entry name" value="ATP_synth_F0_bsu_bac"/>
</dbReference>
<dbReference type="InterPro" id="IPR050059">
    <property type="entry name" value="ATP_synthase_B_chain"/>
</dbReference>
<dbReference type="NCBIfam" id="TIGR01144">
    <property type="entry name" value="ATP_synt_b"/>
    <property type="match status" value="1"/>
</dbReference>
<dbReference type="NCBIfam" id="NF004411">
    <property type="entry name" value="PRK05759.1-2"/>
    <property type="match status" value="1"/>
</dbReference>
<dbReference type="PANTHER" id="PTHR33445:SF1">
    <property type="entry name" value="ATP SYNTHASE SUBUNIT B"/>
    <property type="match status" value="1"/>
</dbReference>
<dbReference type="PANTHER" id="PTHR33445">
    <property type="entry name" value="ATP SYNTHASE SUBUNIT B', CHLOROPLASTIC"/>
    <property type="match status" value="1"/>
</dbReference>
<dbReference type="Pfam" id="PF00430">
    <property type="entry name" value="ATP-synt_B"/>
    <property type="match status" value="1"/>
</dbReference>
<dbReference type="SUPFAM" id="SSF81573">
    <property type="entry name" value="F1F0 ATP synthase subunit B, membrane domain"/>
    <property type="match status" value="1"/>
</dbReference>
<sequence length="156" mass="17576">MNLNASMFGQAISFVIFVWLCMKYVWPPLVKLLDERRAEIAQGLEQTEKAAQELELAKANGEALLTEARSKAQAIINQGKQRQEQMVAEAVDLANQEKARIVAEGKAEVESERSKVRQELKDEMADLVIESASKLINRNLDSSANRDLVNRFINEM</sequence>
<comment type="function">
    <text evidence="1">F(1)F(0) ATP synthase produces ATP from ADP in the presence of a proton or sodium gradient. F-type ATPases consist of two structural domains, F(1) containing the extramembraneous catalytic core and F(0) containing the membrane proton channel, linked together by a central stalk and a peripheral stalk. During catalysis, ATP synthesis in the catalytic domain of F(1) is coupled via a rotary mechanism of the central stalk subunits to proton translocation.</text>
</comment>
<comment type="function">
    <text evidence="1">Component of the F(0) channel, it forms part of the peripheral stalk, linking F(1) to F(0).</text>
</comment>
<comment type="subunit">
    <text evidence="1">F-type ATPases have 2 components, F(1) - the catalytic core - and F(0) - the membrane proton channel. F(1) has five subunits: alpha(3), beta(3), gamma(1), delta(1), epsilon(1). F(0) has three main subunits: a(1), b(2) and c(10-14). The alpha and beta chains form an alternating ring which encloses part of the gamma chain. F(1) is attached to F(0) by a central stalk formed by the gamma and epsilon chains, while a peripheral stalk is formed by the delta and b chains.</text>
</comment>
<comment type="subcellular location">
    <subcellularLocation>
        <location evidence="1">Cell inner membrane</location>
        <topology evidence="1">Single-pass membrane protein</topology>
    </subcellularLocation>
</comment>
<comment type="similarity">
    <text evidence="1">Belongs to the ATPase B chain family.</text>
</comment>
<organism>
    <name type="scientific">Vibrio campbellii (strain ATCC BAA-1116)</name>
    <dbReference type="NCBI Taxonomy" id="2902295"/>
    <lineage>
        <taxon>Bacteria</taxon>
        <taxon>Pseudomonadati</taxon>
        <taxon>Pseudomonadota</taxon>
        <taxon>Gammaproteobacteria</taxon>
        <taxon>Vibrionales</taxon>
        <taxon>Vibrionaceae</taxon>
        <taxon>Vibrio</taxon>
    </lineage>
</organism>
<protein>
    <recommendedName>
        <fullName evidence="1">ATP synthase subunit b 2</fullName>
    </recommendedName>
    <alternativeName>
        <fullName evidence="1">ATP synthase F(0) sector subunit b 2</fullName>
    </alternativeName>
    <alternativeName>
        <fullName evidence="1">ATPase subunit I 2</fullName>
    </alternativeName>
    <alternativeName>
        <fullName evidence="1">F-type ATPase subunit b 2</fullName>
        <shortName evidence="1">F-ATPase subunit b 2</shortName>
    </alternativeName>
</protein>
<evidence type="ECO:0000255" key="1">
    <source>
        <dbReference type="HAMAP-Rule" id="MF_01398"/>
    </source>
</evidence>
<feature type="chain" id="PRO_0000368860" description="ATP synthase subunit b 2">
    <location>
        <begin position="1"/>
        <end position="156"/>
    </location>
</feature>
<feature type="transmembrane region" description="Helical" evidence="1">
    <location>
        <begin position="6"/>
        <end position="26"/>
    </location>
</feature>
<reference key="1">
    <citation type="submission" date="2007-08" db="EMBL/GenBank/DDBJ databases">
        <authorList>
            <consortium name="The Vibrio harveyi Genome Sequencing Project"/>
            <person name="Bassler B."/>
            <person name="Clifton S.W."/>
            <person name="Fulton L."/>
            <person name="Delehaunty K."/>
            <person name="Fronick C."/>
            <person name="Harrison M."/>
            <person name="Markivic C."/>
            <person name="Fulton R."/>
            <person name="Tin-Wollam A.-M."/>
            <person name="Shah N."/>
            <person name="Pepin K."/>
            <person name="Nash W."/>
            <person name="Thiruvilangam P."/>
            <person name="Bhonagiri V."/>
            <person name="Waters C."/>
            <person name="Tu K.C."/>
            <person name="Irgon J."/>
            <person name="Wilson R.K."/>
        </authorList>
    </citation>
    <scope>NUCLEOTIDE SEQUENCE [LARGE SCALE GENOMIC DNA]</scope>
    <source>
        <strain>ATCC BAA-1116 / BB120</strain>
    </source>
</reference>
<keyword id="KW-0066">ATP synthesis</keyword>
<keyword id="KW-0997">Cell inner membrane</keyword>
<keyword id="KW-1003">Cell membrane</keyword>
<keyword id="KW-0138">CF(0)</keyword>
<keyword id="KW-0375">Hydrogen ion transport</keyword>
<keyword id="KW-0406">Ion transport</keyword>
<keyword id="KW-0472">Membrane</keyword>
<keyword id="KW-0812">Transmembrane</keyword>
<keyword id="KW-1133">Transmembrane helix</keyword>
<keyword id="KW-0813">Transport</keyword>
<proteinExistence type="inferred from homology"/>
<name>ATPF2_VIBC1</name>